<comment type="function">
    <text evidence="1">Enhances virion budding by targeting host CD4 and Tetherin/BST2 to proteasome degradation. Degradation of CD4 prevents any unwanted premature interactions between viral Env and its host receptor CD4 in the endoplasmic reticulum. Degradation of antiretroviral protein Tetherin/BST2 is important for virion budding, as BST2 tethers new viral particles to the host cell membrane. Mechanistically, Vpu bridges either CD4 or BST2 to BTRC, a substrate recognition subunit of the Skp1/Cullin/F-box protein E3 ubiquitin ligase, induces their ubiquitination and subsequent proteasomal degradation. The alteration of the E3 ligase specificity by Vpu seems to promote the degradation of host IKBKB, leading to NF-kappa-B down-regulation and subsequent apoptosis. Acts as a viroporin that forms an oligomeric ion channel in membranes. Modulates the host DNA repair mechanisms to promote degradation of nuclear viral cDNA in cells that are already productively infected in order to suppress immune sensing and proviral hyper-integration (superinfection). Manipulates PML-NBs and modulates SUMOylation of host BLM protein thereby enhancing its DNA-end processing activity toward viral unintegrated linear DNA. Also inhibits RAD52-mediated homologous repair of viral cDNA, preventing the generation of dead-end circular forms of single copies of the long terminal repeat and permitting sustained nucleolytic attack.</text>
</comment>
<comment type="activity regulation">
    <text evidence="1">Ion channel activity is inhibited by hexamethylene amiloride in vitro.</text>
</comment>
<comment type="subunit">
    <text evidence="1">Homopentamer. Interacts with host CD4 and BRTC; these interactions induce proteasomal degradation of CD4. Interacts with host BST2; this interaction leads to the degradation of host BST2. Interacts with host FBXW11. Interacts with host AP1M1; this interaction plays a role in the mistrafficking and subsequent degradation of host BST2. Interacts with host RANBP2; this interaction allows Vpu to down-regulate host BLM sumoylation.</text>
</comment>
<comment type="subcellular location">
    <subcellularLocation>
        <location evidence="1">Host membrane</location>
        <topology evidence="1">Single-pass type I membrane protein</topology>
    </subcellularLocation>
</comment>
<comment type="domain">
    <text evidence="1">The N-terminus and transmembrane domains are required for self-oligomerization and proper virion budding, whereas the cytoplasmic domain is required for CD4 degradation. The cytoplasmic domain is composed of 2 amphipathic alpha helix that form a U-shape.</text>
</comment>
<comment type="PTM">
    <text evidence="1">Phosphorylated by host CK2. This phosphorylation is necessary for interaction with human BTRC and degradation of CD4.</text>
</comment>
<comment type="miscellaneous">
    <text evidence="1">HIV-1 lineages are divided in three main groups, M (for Major), O (for Outlier), and N (for New, or Non-M, Non-O). The vast majority of strains found worldwide belong to the group M. Group O seems to be endemic to and largely confined to Cameroon and neighboring countries in West Central Africa, where these viruses represent a small minority of HIV-1 strains. The group N is represented by a limited number of isolates from Cameroonian persons. The group M is further subdivided in 9 clades or subtypes (A to D, F to H, J and K).</text>
</comment>
<comment type="similarity">
    <text evidence="1">Belongs to the HIV-1 VPU protein family.</text>
</comment>
<gene>
    <name evidence="1" type="primary">vpu</name>
</gene>
<proteinExistence type="inferred from homology"/>
<keyword id="KW-0014">AIDS</keyword>
<keyword id="KW-0053">Apoptosis</keyword>
<keyword id="KW-1043">Host membrane</keyword>
<keyword id="KW-0945">Host-virus interaction</keyword>
<keyword id="KW-1090">Inhibition of host innate immune response by virus</keyword>
<keyword id="KW-1084">Inhibition of host tetherin by virus</keyword>
<keyword id="KW-0407">Ion channel</keyword>
<keyword id="KW-0406">Ion transport</keyword>
<keyword id="KW-0472">Membrane</keyword>
<keyword id="KW-0597">Phosphoprotein</keyword>
<keyword id="KW-1185">Reference proteome</keyword>
<keyword id="KW-0812">Transmembrane</keyword>
<keyword id="KW-1133">Transmembrane helix</keyword>
<keyword id="KW-0813">Transport</keyword>
<keyword id="KW-0899">Viral immunoevasion</keyword>
<accession>Q75007</accession>
<sequence>MVDLLAKVDYRIVIVAFIVALIIAIVVWTIAYIEYRKLLRQRRIDRLIKRTRERAEDSGNESDGDTEELSTMVDMGNLRLLDVNDL</sequence>
<dbReference type="EMBL" id="U46016">
    <property type="protein sequence ID" value="AAB36506.1"/>
    <property type="molecule type" value="Genomic_DNA"/>
</dbReference>
<dbReference type="Proteomes" id="UP000007694">
    <property type="component" value="Segment"/>
</dbReference>
<dbReference type="GO" id="GO:0033644">
    <property type="term" value="C:host cell membrane"/>
    <property type="evidence" value="ECO:0007669"/>
    <property type="project" value="UniProtKB-SubCell"/>
</dbReference>
<dbReference type="GO" id="GO:0016020">
    <property type="term" value="C:membrane"/>
    <property type="evidence" value="ECO:0007669"/>
    <property type="project" value="UniProtKB-UniRule"/>
</dbReference>
<dbReference type="GO" id="GO:0042609">
    <property type="term" value="F:CD4 receptor binding"/>
    <property type="evidence" value="ECO:0007669"/>
    <property type="project" value="UniProtKB-UniRule"/>
</dbReference>
<dbReference type="GO" id="GO:0005261">
    <property type="term" value="F:monoatomic cation channel activity"/>
    <property type="evidence" value="ECO:0007669"/>
    <property type="project" value="UniProtKB-UniRule"/>
</dbReference>
<dbReference type="GO" id="GO:0032801">
    <property type="term" value="P:receptor catabolic process"/>
    <property type="evidence" value="ECO:0007669"/>
    <property type="project" value="UniProtKB-UniRule"/>
</dbReference>
<dbReference type="GO" id="GO:0052170">
    <property type="term" value="P:symbiont-mediated suppression of host innate immune response"/>
    <property type="evidence" value="ECO:0007669"/>
    <property type="project" value="UniProtKB-KW"/>
</dbReference>
<dbReference type="GO" id="GO:0039502">
    <property type="term" value="P:symbiont-mediated suppression of host type I interferon-mediated signaling pathway"/>
    <property type="evidence" value="ECO:0007669"/>
    <property type="project" value="UniProtKB-UniRule"/>
</dbReference>
<dbReference type="GO" id="GO:0039587">
    <property type="term" value="P:symbiont-mediated-mediated suppression of host tetherin activity"/>
    <property type="evidence" value="ECO:0007669"/>
    <property type="project" value="UniProtKB-UniRule"/>
</dbReference>
<dbReference type="GO" id="GO:0019076">
    <property type="term" value="P:viral release from host cell"/>
    <property type="evidence" value="ECO:0007669"/>
    <property type="project" value="UniProtKB-UniRule"/>
</dbReference>
<dbReference type="Gene3D" id="1.10.195.10">
    <property type="entry name" value="HIV-1 VPU cytoplasmic domain"/>
    <property type="match status" value="1"/>
</dbReference>
<dbReference type="HAMAP" id="MF_04082">
    <property type="entry name" value="HIV_VPU"/>
    <property type="match status" value="1"/>
</dbReference>
<dbReference type="InterPro" id="IPR008187">
    <property type="entry name" value="Vpu"/>
</dbReference>
<dbReference type="InterPro" id="IPR009032">
    <property type="entry name" value="Vpu_cyt_dom_sf"/>
</dbReference>
<dbReference type="Pfam" id="PF00558">
    <property type="entry name" value="Vpu"/>
    <property type="match status" value="1"/>
</dbReference>
<dbReference type="SUPFAM" id="SSF57647">
    <property type="entry name" value="HIV-1 VPU cytoplasmic domain"/>
    <property type="match status" value="1"/>
</dbReference>
<protein>
    <recommendedName>
        <fullName evidence="1">Protein Vpu</fullName>
    </recommendedName>
    <alternativeName>
        <fullName evidence="1">U ORF protein</fullName>
    </alternativeName>
    <alternativeName>
        <fullName evidence="1">Viral protein U</fullName>
    </alternativeName>
</protein>
<feature type="chain" id="PRO_0000244326" description="Protein Vpu">
    <location>
        <begin position="1"/>
        <end position="86"/>
    </location>
</feature>
<feature type="topological domain" description="Extracellular" evidence="1">
    <location>
        <begin position="1"/>
        <end position="12"/>
    </location>
</feature>
<feature type="transmembrane region" description="Helical" evidence="1">
    <location>
        <begin position="13"/>
        <end position="33"/>
    </location>
</feature>
<feature type="topological domain" description="Cytoplasmic" evidence="1">
    <location>
        <begin position="34"/>
        <end position="86"/>
    </location>
</feature>
<feature type="region of interest" description="Disordered" evidence="2">
    <location>
        <begin position="52"/>
        <end position="71"/>
    </location>
</feature>
<feature type="compositionally biased region" description="Acidic residues" evidence="2">
    <location>
        <begin position="58"/>
        <end position="68"/>
    </location>
</feature>
<feature type="modified residue" description="Phosphoserine; by host CK2" evidence="1">
    <location>
        <position position="58"/>
    </location>
</feature>
<feature type="modified residue" description="Phosphoserine; by host CK2" evidence="1">
    <location>
        <position position="62"/>
    </location>
</feature>
<organismHost>
    <name type="scientific">Homo sapiens</name>
    <name type="common">Human</name>
    <dbReference type="NCBI Taxonomy" id="9606"/>
</organismHost>
<name>VPU_HV1ET</name>
<evidence type="ECO:0000255" key="1">
    <source>
        <dbReference type="HAMAP-Rule" id="MF_04082"/>
    </source>
</evidence>
<evidence type="ECO:0000256" key="2">
    <source>
        <dbReference type="SAM" id="MobiDB-lite"/>
    </source>
</evidence>
<reference key="1">
    <citation type="journal article" date="1996" name="AIDS Res. Hum. Retroviruses">
        <title>Full-length sequence of an ethiopian human immunodeficiency virus type 1 (HIV-1) isolate of genetic subtype C.</title>
        <authorList>
            <person name="Salminen M.O."/>
            <person name="Johansson B."/>
            <person name="Sonnerborg A."/>
            <person name="Ayehunie S."/>
            <person name="Gotte D."/>
            <person name="Leinikki P."/>
            <person name="Burke D.S."/>
            <person name="McCutchan F.E."/>
        </authorList>
    </citation>
    <scope>NUCLEOTIDE SEQUENCE [GENOMIC DNA]</scope>
    <source>
        <strain>C2220</strain>
    </source>
</reference>
<organism>
    <name type="scientific">Human immunodeficiency virus type 1 group M subtype C (isolate ETH2220)</name>
    <name type="common">HIV-1</name>
    <dbReference type="NCBI Taxonomy" id="388796"/>
    <lineage>
        <taxon>Viruses</taxon>
        <taxon>Riboviria</taxon>
        <taxon>Pararnavirae</taxon>
        <taxon>Artverviricota</taxon>
        <taxon>Revtraviricetes</taxon>
        <taxon>Ortervirales</taxon>
        <taxon>Retroviridae</taxon>
        <taxon>Orthoretrovirinae</taxon>
        <taxon>Lentivirus</taxon>
        <taxon>Human immunodeficiency virus type 1</taxon>
    </lineage>
</organism>